<gene>
    <name evidence="1" type="primary">ruvB</name>
    <name type="ordered locus">AM1_4753</name>
</gene>
<sequence length="375" mass="41920">MAIVSSKQSPQPDGSKKPSQAKSVKKSVEHSKPQQTDALLQPEAVQEEFVGKQDDKLRPQRFDEYIGQRELKEVLDIAIQATKSRQEALDHLLLYGPPGLGKTTISLILAAELGVNCKVTSAPALERPRDIVGLLVNLQPRDILFIDEIHRLSRMTEELLYPAMEDFRLDITIGKGQSARIRSLPLKPFTLVGATTRVGALTSPLRDRFGFVQRLRFYEADELGQIVLRTADILKAKITSDAAEEVARRSRGTPRIANRLLKRVRDYAEVKHSGEITQTIAQEALELFNVDPCGLDWTDRRLLTVMIEQYNGGPVGVDTLAAATGEDSQTIEEVYEPYLMQIGYLNRTPRGRVATPAAWTHLGYQPPDEQMRLLS</sequence>
<proteinExistence type="inferred from homology"/>
<keyword id="KW-0067">ATP-binding</keyword>
<keyword id="KW-0963">Cytoplasm</keyword>
<keyword id="KW-0227">DNA damage</keyword>
<keyword id="KW-0233">DNA recombination</keyword>
<keyword id="KW-0234">DNA repair</keyword>
<keyword id="KW-0238">DNA-binding</keyword>
<keyword id="KW-0378">Hydrolase</keyword>
<keyword id="KW-0547">Nucleotide-binding</keyword>
<keyword id="KW-1185">Reference proteome</keyword>
<evidence type="ECO:0000255" key="1">
    <source>
        <dbReference type="HAMAP-Rule" id="MF_00016"/>
    </source>
</evidence>
<evidence type="ECO:0000256" key="2">
    <source>
        <dbReference type="SAM" id="MobiDB-lite"/>
    </source>
</evidence>
<reference key="1">
    <citation type="journal article" date="2008" name="Proc. Natl. Acad. Sci. U.S.A.">
        <title>Niche adaptation and genome expansion in the chlorophyll d-producing cyanobacterium Acaryochloris marina.</title>
        <authorList>
            <person name="Swingley W.D."/>
            <person name="Chen M."/>
            <person name="Cheung P.C."/>
            <person name="Conrad A.L."/>
            <person name="Dejesa L.C."/>
            <person name="Hao J."/>
            <person name="Honchak B.M."/>
            <person name="Karbach L.E."/>
            <person name="Kurdoglu A."/>
            <person name="Lahiri S."/>
            <person name="Mastrian S.D."/>
            <person name="Miyashita H."/>
            <person name="Page L."/>
            <person name="Ramakrishna P."/>
            <person name="Satoh S."/>
            <person name="Sattley W.M."/>
            <person name="Shimada Y."/>
            <person name="Taylor H.L."/>
            <person name="Tomo T."/>
            <person name="Tsuchiya T."/>
            <person name="Wang Z.T."/>
            <person name="Raymond J."/>
            <person name="Mimuro M."/>
            <person name="Blankenship R.E."/>
            <person name="Touchman J.W."/>
        </authorList>
    </citation>
    <scope>NUCLEOTIDE SEQUENCE [LARGE SCALE GENOMIC DNA]</scope>
    <source>
        <strain>MBIC 11017</strain>
    </source>
</reference>
<dbReference type="EC" id="3.6.4.-" evidence="1"/>
<dbReference type="EMBL" id="CP000828">
    <property type="protein sequence ID" value="ABW29725.1"/>
    <property type="molecule type" value="Genomic_DNA"/>
</dbReference>
<dbReference type="RefSeq" id="WP_012165010.1">
    <property type="nucleotide sequence ID" value="NC_009925.1"/>
</dbReference>
<dbReference type="SMR" id="B0C2D5"/>
<dbReference type="STRING" id="329726.AM1_4753"/>
<dbReference type="KEGG" id="amr:AM1_4753"/>
<dbReference type="eggNOG" id="COG2255">
    <property type="taxonomic scope" value="Bacteria"/>
</dbReference>
<dbReference type="HOGENOM" id="CLU_055599_1_0_3"/>
<dbReference type="OrthoDB" id="9804478at2"/>
<dbReference type="Proteomes" id="UP000000268">
    <property type="component" value="Chromosome"/>
</dbReference>
<dbReference type="GO" id="GO:0005737">
    <property type="term" value="C:cytoplasm"/>
    <property type="evidence" value="ECO:0007669"/>
    <property type="project" value="UniProtKB-SubCell"/>
</dbReference>
<dbReference type="GO" id="GO:0048476">
    <property type="term" value="C:Holliday junction resolvase complex"/>
    <property type="evidence" value="ECO:0007669"/>
    <property type="project" value="UniProtKB-UniRule"/>
</dbReference>
<dbReference type="GO" id="GO:0005524">
    <property type="term" value="F:ATP binding"/>
    <property type="evidence" value="ECO:0007669"/>
    <property type="project" value="UniProtKB-UniRule"/>
</dbReference>
<dbReference type="GO" id="GO:0016887">
    <property type="term" value="F:ATP hydrolysis activity"/>
    <property type="evidence" value="ECO:0007669"/>
    <property type="project" value="InterPro"/>
</dbReference>
<dbReference type="GO" id="GO:0000400">
    <property type="term" value="F:four-way junction DNA binding"/>
    <property type="evidence" value="ECO:0007669"/>
    <property type="project" value="UniProtKB-UniRule"/>
</dbReference>
<dbReference type="GO" id="GO:0009378">
    <property type="term" value="F:four-way junction helicase activity"/>
    <property type="evidence" value="ECO:0007669"/>
    <property type="project" value="InterPro"/>
</dbReference>
<dbReference type="GO" id="GO:0006310">
    <property type="term" value="P:DNA recombination"/>
    <property type="evidence" value="ECO:0007669"/>
    <property type="project" value="UniProtKB-UniRule"/>
</dbReference>
<dbReference type="GO" id="GO:0006281">
    <property type="term" value="P:DNA repair"/>
    <property type="evidence" value="ECO:0007669"/>
    <property type="project" value="UniProtKB-UniRule"/>
</dbReference>
<dbReference type="CDD" id="cd00009">
    <property type="entry name" value="AAA"/>
    <property type="match status" value="1"/>
</dbReference>
<dbReference type="Gene3D" id="1.10.8.60">
    <property type="match status" value="1"/>
</dbReference>
<dbReference type="Gene3D" id="3.40.50.300">
    <property type="entry name" value="P-loop containing nucleotide triphosphate hydrolases"/>
    <property type="match status" value="1"/>
</dbReference>
<dbReference type="Gene3D" id="1.10.10.10">
    <property type="entry name" value="Winged helix-like DNA-binding domain superfamily/Winged helix DNA-binding domain"/>
    <property type="match status" value="1"/>
</dbReference>
<dbReference type="HAMAP" id="MF_00016">
    <property type="entry name" value="DNA_HJ_migration_RuvB"/>
    <property type="match status" value="1"/>
</dbReference>
<dbReference type="InterPro" id="IPR003593">
    <property type="entry name" value="AAA+_ATPase"/>
</dbReference>
<dbReference type="InterPro" id="IPR041445">
    <property type="entry name" value="AAA_lid_4"/>
</dbReference>
<dbReference type="InterPro" id="IPR004605">
    <property type="entry name" value="DNA_helicase_Holl-junc_RuvB"/>
</dbReference>
<dbReference type="InterPro" id="IPR027417">
    <property type="entry name" value="P-loop_NTPase"/>
</dbReference>
<dbReference type="InterPro" id="IPR008824">
    <property type="entry name" value="RuvB-like_N"/>
</dbReference>
<dbReference type="InterPro" id="IPR008823">
    <property type="entry name" value="RuvB_C"/>
</dbReference>
<dbReference type="InterPro" id="IPR036388">
    <property type="entry name" value="WH-like_DNA-bd_sf"/>
</dbReference>
<dbReference type="InterPro" id="IPR036390">
    <property type="entry name" value="WH_DNA-bd_sf"/>
</dbReference>
<dbReference type="NCBIfam" id="NF000868">
    <property type="entry name" value="PRK00080.1"/>
    <property type="match status" value="1"/>
</dbReference>
<dbReference type="NCBIfam" id="TIGR00635">
    <property type="entry name" value="ruvB"/>
    <property type="match status" value="1"/>
</dbReference>
<dbReference type="PANTHER" id="PTHR42848">
    <property type="match status" value="1"/>
</dbReference>
<dbReference type="PANTHER" id="PTHR42848:SF1">
    <property type="entry name" value="HOLLIDAY JUNCTION BRANCH MIGRATION COMPLEX SUBUNIT RUVB"/>
    <property type="match status" value="1"/>
</dbReference>
<dbReference type="Pfam" id="PF17864">
    <property type="entry name" value="AAA_lid_4"/>
    <property type="match status" value="1"/>
</dbReference>
<dbReference type="Pfam" id="PF05491">
    <property type="entry name" value="RuvB_C"/>
    <property type="match status" value="1"/>
</dbReference>
<dbReference type="Pfam" id="PF05496">
    <property type="entry name" value="RuvB_N"/>
    <property type="match status" value="1"/>
</dbReference>
<dbReference type="SMART" id="SM00382">
    <property type="entry name" value="AAA"/>
    <property type="match status" value="1"/>
</dbReference>
<dbReference type="SUPFAM" id="SSF52540">
    <property type="entry name" value="P-loop containing nucleoside triphosphate hydrolases"/>
    <property type="match status" value="1"/>
</dbReference>
<dbReference type="SUPFAM" id="SSF46785">
    <property type="entry name" value="Winged helix' DNA-binding domain"/>
    <property type="match status" value="1"/>
</dbReference>
<accession>B0C2D5</accession>
<name>RUVB_ACAM1</name>
<protein>
    <recommendedName>
        <fullName evidence="1">Holliday junction branch migration complex subunit RuvB</fullName>
        <ecNumber evidence="1">3.6.4.-</ecNumber>
    </recommendedName>
</protein>
<organism>
    <name type="scientific">Acaryochloris marina (strain MBIC 11017)</name>
    <dbReference type="NCBI Taxonomy" id="329726"/>
    <lineage>
        <taxon>Bacteria</taxon>
        <taxon>Bacillati</taxon>
        <taxon>Cyanobacteriota</taxon>
        <taxon>Cyanophyceae</taxon>
        <taxon>Acaryochloridales</taxon>
        <taxon>Acaryochloridaceae</taxon>
        <taxon>Acaryochloris</taxon>
    </lineage>
</organism>
<comment type="function">
    <text evidence="1">The RuvA-RuvB-RuvC complex processes Holliday junction (HJ) DNA during genetic recombination and DNA repair, while the RuvA-RuvB complex plays an important role in the rescue of blocked DNA replication forks via replication fork reversal (RFR). RuvA specifically binds to HJ cruciform DNA, conferring on it an open structure. The RuvB hexamer acts as an ATP-dependent pump, pulling dsDNA into and through the RuvAB complex. RuvB forms 2 homohexamers on either side of HJ DNA bound by 1 or 2 RuvA tetramers; 4 subunits per hexamer contact DNA at a time. Coordinated motions by a converter formed by DNA-disengaged RuvB subunits stimulates ATP hydrolysis and nucleotide exchange. Immobilization of the converter enables RuvB to convert the ATP-contained energy into a lever motion, pulling 2 nucleotides of DNA out of the RuvA tetramer per ATP hydrolyzed, thus driving DNA branch migration. The RuvB motors rotate together with the DNA substrate, which together with the progressing nucleotide cycle form the mechanistic basis for DNA recombination by continuous HJ branch migration. Branch migration allows RuvC to scan DNA until it finds its consensus sequence, where it cleaves and resolves cruciform DNA.</text>
</comment>
<comment type="catalytic activity">
    <reaction evidence="1">
        <text>ATP + H2O = ADP + phosphate + H(+)</text>
        <dbReference type="Rhea" id="RHEA:13065"/>
        <dbReference type="ChEBI" id="CHEBI:15377"/>
        <dbReference type="ChEBI" id="CHEBI:15378"/>
        <dbReference type="ChEBI" id="CHEBI:30616"/>
        <dbReference type="ChEBI" id="CHEBI:43474"/>
        <dbReference type="ChEBI" id="CHEBI:456216"/>
    </reaction>
</comment>
<comment type="subunit">
    <text evidence="1">Homohexamer. Forms an RuvA(8)-RuvB(12)-Holliday junction (HJ) complex. HJ DNA is sandwiched between 2 RuvA tetramers; dsDNA enters through RuvA and exits via RuvB. An RuvB hexamer assembles on each DNA strand where it exits the tetramer. Each RuvB hexamer is contacted by two RuvA subunits (via domain III) on 2 adjacent RuvB subunits; this complex drives branch migration. In the full resolvosome a probable DNA-RuvA(4)-RuvB(12)-RuvC(2) complex forms which resolves the HJ.</text>
</comment>
<comment type="subcellular location">
    <subcellularLocation>
        <location evidence="1">Cytoplasm</location>
    </subcellularLocation>
</comment>
<comment type="domain">
    <text evidence="1">Has 3 domains, the large (RuvB-L) and small ATPase (RuvB-S) domains and the C-terminal head (RuvB-H) domain. The head domain binds DNA, while the ATPase domains jointly bind ATP, ADP or are empty depending on the state of the subunit in the translocation cycle. During a single DNA translocation step the structure of each domain remains the same, but their relative positions change.</text>
</comment>
<comment type="similarity">
    <text evidence="1">Belongs to the RuvB family.</text>
</comment>
<feature type="chain" id="PRO_1000074069" description="Holliday junction branch migration complex subunit RuvB">
    <location>
        <begin position="1"/>
        <end position="375"/>
    </location>
</feature>
<feature type="region of interest" description="Disordered" evidence="2">
    <location>
        <begin position="1"/>
        <end position="44"/>
    </location>
</feature>
<feature type="region of interest" description="Large ATPase domain (RuvB-L)" evidence="1">
    <location>
        <begin position="13"/>
        <end position="218"/>
    </location>
</feature>
<feature type="region of interest" description="Small ATPAse domain (RuvB-S)" evidence="1">
    <location>
        <begin position="219"/>
        <end position="289"/>
    </location>
</feature>
<feature type="region of interest" description="Head domain (RuvB-H)" evidence="1">
    <location>
        <begin position="292"/>
        <end position="375"/>
    </location>
</feature>
<feature type="compositionally biased region" description="Polar residues" evidence="2">
    <location>
        <begin position="1"/>
        <end position="22"/>
    </location>
</feature>
<feature type="binding site" evidence="1">
    <location>
        <position position="57"/>
    </location>
    <ligand>
        <name>ATP</name>
        <dbReference type="ChEBI" id="CHEBI:30616"/>
    </ligand>
</feature>
<feature type="binding site" evidence="1">
    <location>
        <position position="58"/>
    </location>
    <ligand>
        <name>ATP</name>
        <dbReference type="ChEBI" id="CHEBI:30616"/>
    </ligand>
</feature>
<feature type="binding site" evidence="1">
    <location>
        <position position="99"/>
    </location>
    <ligand>
        <name>ATP</name>
        <dbReference type="ChEBI" id="CHEBI:30616"/>
    </ligand>
</feature>
<feature type="binding site" evidence="1">
    <location>
        <position position="102"/>
    </location>
    <ligand>
        <name>ATP</name>
        <dbReference type="ChEBI" id="CHEBI:30616"/>
    </ligand>
</feature>
<feature type="binding site" evidence="1">
    <location>
        <position position="103"/>
    </location>
    <ligand>
        <name>ATP</name>
        <dbReference type="ChEBI" id="CHEBI:30616"/>
    </ligand>
</feature>
<feature type="binding site" evidence="1">
    <location>
        <position position="103"/>
    </location>
    <ligand>
        <name>Mg(2+)</name>
        <dbReference type="ChEBI" id="CHEBI:18420"/>
    </ligand>
</feature>
<feature type="binding site" evidence="1">
    <location>
        <position position="104"/>
    </location>
    <ligand>
        <name>ATP</name>
        <dbReference type="ChEBI" id="CHEBI:30616"/>
    </ligand>
</feature>
<feature type="binding site" evidence="1">
    <location>
        <begin position="165"/>
        <end position="167"/>
    </location>
    <ligand>
        <name>ATP</name>
        <dbReference type="ChEBI" id="CHEBI:30616"/>
    </ligand>
</feature>
<feature type="binding site" evidence="1">
    <location>
        <position position="208"/>
    </location>
    <ligand>
        <name>ATP</name>
        <dbReference type="ChEBI" id="CHEBI:30616"/>
    </ligand>
</feature>
<feature type="binding site" evidence="1">
    <location>
        <position position="218"/>
    </location>
    <ligand>
        <name>ATP</name>
        <dbReference type="ChEBI" id="CHEBI:30616"/>
    </ligand>
</feature>
<feature type="binding site" evidence="1">
    <location>
        <position position="255"/>
    </location>
    <ligand>
        <name>ATP</name>
        <dbReference type="ChEBI" id="CHEBI:30616"/>
    </ligand>
</feature>
<feature type="binding site" evidence="1">
    <location>
        <position position="347"/>
    </location>
    <ligand>
        <name>DNA</name>
        <dbReference type="ChEBI" id="CHEBI:16991"/>
    </ligand>
</feature>
<feature type="binding site" evidence="1">
    <location>
        <position position="352"/>
    </location>
    <ligand>
        <name>DNA</name>
        <dbReference type="ChEBI" id="CHEBI:16991"/>
    </ligand>
</feature>